<dbReference type="EC" id="1.2.1.41" evidence="1"/>
<dbReference type="EMBL" id="CP000901">
    <property type="protein sequence ID" value="ABX87041.1"/>
    <property type="molecule type" value="Genomic_DNA"/>
</dbReference>
<dbReference type="SMR" id="A9R2X0"/>
<dbReference type="KEGG" id="ypg:YpAngola_A3300"/>
<dbReference type="PATRIC" id="fig|349746.12.peg.4367"/>
<dbReference type="UniPathway" id="UPA00098">
    <property type="reaction ID" value="UER00360"/>
</dbReference>
<dbReference type="GO" id="GO:0005737">
    <property type="term" value="C:cytoplasm"/>
    <property type="evidence" value="ECO:0007669"/>
    <property type="project" value="UniProtKB-SubCell"/>
</dbReference>
<dbReference type="GO" id="GO:0004350">
    <property type="term" value="F:glutamate-5-semialdehyde dehydrogenase activity"/>
    <property type="evidence" value="ECO:0007669"/>
    <property type="project" value="UniProtKB-UniRule"/>
</dbReference>
<dbReference type="GO" id="GO:0050661">
    <property type="term" value="F:NADP binding"/>
    <property type="evidence" value="ECO:0007669"/>
    <property type="project" value="InterPro"/>
</dbReference>
<dbReference type="GO" id="GO:0055129">
    <property type="term" value="P:L-proline biosynthetic process"/>
    <property type="evidence" value="ECO:0007669"/>
    <property type="project" value="UniProtKB-UniRule"/>
</dbReference>
<dbReference type="CDD" id="cd07079">
    <property type="entry name" value="ALDH_F18-19_ProA-GPR"/>
    <property type="match status" value="1"/>
</dbReference>
<dbReference type="FunFam" id="3.40.309.10:FF:000006">
    <property type="entry name" value="Gamma-glutamyl phosphate reductase"/>
    <property type="match status" value="1"/>
</dbReference>
<dbReference type="Gene3D" id="3.40.605.10">
    <property type="entry name" value="Aldehyde Dehydrogenase, Chain A, domain 1"/>
    <property type="match status" value="1"/>
</dbReference>
<dbReference type="Gene3D" id="3.40.309.10">
    <property type="entry name" value="Aldehyde Dehydrogenase, Chain A, domain 2"/>
    <property type="match status" value="1"/>
</dbReference>
<dbReference type="HAMAP" id="MF_00412">
    <property type="entry name" value="ProA"/>
    <property type="match status" value="1"/>
</dbReference>
<dbReference type="InterPro" id="IPR016161">
    <property type="entry name" value="Ald_DH/histidinol_DH"/>
</dbReference>
<dbReference type="InterPro" id="IPR016163">
    <property type="entry name" value="Ald_DH_C"/>
</dbReference>
<dbReference type="InterPro" id="IPR016162">
    <property type="entry name" value="Ald_DH_N"/>
</dbReference>
<dbReference type="InterPro" id="IPR015590">
    <property type="entry name" value="Aldehyde_DH_dom"/>
</dbReference>
<dbReference type="InterPro" id="IPR020593">
    <property type="entry name" value="G-glutamylP_reductase_CS"/>
</dbReference>
<dbReference type="InterPro" id="IPR012134">
    <property type="entry name" value="Glu-5-SA_DH"/>
</dbReference>
<dbReference type="InterPro" id="IPR000965">
    <property type="entry name" value="GPR_dom"/>
</dbReference>
<dbReference type="NCBIfam" id="NF001221">
    <property type="entry name" value="PRK00197.1"/>
    <property type="match status" value="1"/>
</dbReference>
<dbReference type="NCBIfam" id="TIGR00407">
    <property type="entry name" value="proA"/>
    <property type="match status" value="1"/>
</dbReference>
<dbReference type="PANTHER" id="PTHR11063:SF8">
    <property type="entry name" value="DELTA-1-PYRROLINE-5-CARBOXYLATE SYNTHASE"/>
    <property type="match status" value="1"/>
</dbReference>
<dbReference type="PANTHER" id="PTHR11063">
    <property type="entry name" value="GLUTAMATE SEMIALDEHYDE DEHYDROGENASE"/>
    <property type="match status" value="1"/>
</dbReference>
<dbReference type="Pfam" id="PF00171">
    <property type="entry name" value="Aldedh"/>
    <property type="match status" value="1"/>
</dbReference>
<dbReference type="PIRSF" id="PIRSF000151">
    <property type="entry name" value="GPR"/>
    <property type="match status" value="1"/>
</dbReference>
<dbReference type="SUPFAM" id="SSF53720">
    <property type="entry name" value="ALDH-like"/>
    <property type="match status" value="1"/>
</dbReference>
<dbReference type="PROSITE" id="PS01223">
    <property type="entry name" value="PROA"/>
    <property type="match status" value="1"/>
</dbReference>
<proteinExistence type="inferred from homology"/>
<keyword id="KW-0028">Amino-acid biosynthesis</keyword>
<keyword id="KW-0963">Cytoplasm</keyword>
<keyword id="KW-0521">NADP</keyword>
<keyword id="KW-0560">Oxidoreductase</keyword>
<keyword id="KW-0641">Proline biosynthesis</keyword>
<comment type="function">
    <text evidence="1">Catalyzes the NADPH-dependent reduction of L-glutamate 5-phosphate into L-glutamate 5-semialdehyde and phosphate. The product spontaneously undergoes cyclization to form 1-pyrroline-5-carboxylate.</text>
</comment>
<comment type="catalytic activity">
    <reaction evidence="1">
        <text>L-glutamate 5-semialdehyde + phosphate + NADP(+) = L-glutamyl 5-phosphate + NADPH + H(+)</text>
        <dbReference type="Rhea" id="RHEA:19541"/>
        <dbReference type="ChEBI" id="CHEBI:15378"/>
        <dbReference type="ChEBI" id="CHEBI:43474"/>
        <dbReference type="ChEBI" id="CHEBI:57783"/>
        <dbReference type="ChEBI" id="CHEBI:58066"/>
        <dbReference type="ChEBI" id="CHEBI:58274"/>
        <dbReference type="ChEBI" id="CHEBI:58349"/>
        <dbReference type="EC" id="1.2.1.41"/>
    </reaction>
</comment>
<comment type="pathway">
    <text evidence="1">Amino-acid biosynthesis; L-proline biosynthesis; L-glutamate 5-semialdehyde from L-glutamate: step 2/2.</text>
</comment>
<comment type="subcellular location">
    <subcellularLocation>
        <location evidence="1">Cytoplasm</location>
    </subcellularLocation>
</comment>
<comment type="similarity">
    <text evidence="1">Belongs to the gamma-glutamyl phosphate reductase family.</text>
</comment>
<gene>
    <name evidence="1" type="primary">proA</name>
    <name type="ordered locus">YpAngola_A3300</name>
</gene>
<protein>
    <recommendedName>
        <fullName evidence="1">Gamma-glutamyl phosphate reductase</fullName>
        <shortName evidence="1">GPR</shortName>
        <ecNumber evidence="1">1.2.1.41</ecNumber>
    </recommendedName>
    <alternativeName>
        <fullName evidence="1">Glutamate-5-semialdehyde dehydrogenase</fullName>
    </alternativeName>
    <alternativeName>
        <fullName evidence="1">Glutamyl-gamma-semialdehyde dehydrogenase</fullName>
        <shortName evidence="1">GSA dehydrogenase</shortName>
    </alternativeName>
</protein>
<accession>A9R2X0</accession>
<evidence type="ECO:0000255" key="1">
    <source>
        <dbReference type="HAMAP-Rule" id="MF_00412"/>
    </source>
</evidence>
<reference key="1">
    <citation type="journal article" date="2010" name="J. Bacteriol.">
        <title>Genome sequence of the deep-rooted Yersinia pestis strain Angola reveals new insights into the evolution and pangenome of the plague bacterium.</title>
        <authorList>
            <person name="Eppinger M."/>
            <person name="Worsham P.L."/>
            <person name="Nikolich M.P."/>
            <person name="Riley D.R."/>
            <person name="Sebastian Y."/>
            <person name="Mou S."/>
            <person name="Achtman M."/>
            <person name="Lindler L.E."/>
            <person name="Ravel J."/>
        </authorList>
    </citation>
    <scope>NUCLEOTIDE SEQUENCE [LARGE SCALE GENOMIC DNA]</scope>
    <source>
        <strain>Angola</strain>
    </source>
</reference>
<name>PROA_YERPG</name>
<organism>
    <name type="scientific">Yersinia pestis bv. Antiqua (strain Angola)</name>
    <dbReference type="NCBI Taxonomy" id="349746"/>
    <lineage>
        <taxon>Bacteria</taxon>
        <taxon>Pseudomonadati</taxon>
        <taxon>Pseudomonadota</taxon>
        <taxon>Gammaproteobacteria</taxon>
        <taxon>Enterobacterales</taxon>
        <taxon>Yersiniaceae</taxon>
        <taxon>Yersinia</taxon>
    </lineage>
</organism>
<feature type="chain" id="PRO_1000193679" description="Gamma-glutamyl phosphate reductase">
    <location>
        <begin position="1"/>
        <end position="419"/>
    </location>
</feature>
<sequence>MNLLEHMGKAAKQASWQLAMLSTAKKNQALAVIANLLESESQTILQANERDMAAARESGMSEALLDRLLLTPARLAAIANDVRQVCRLNDPVGRVIDGSLLDSGLKLERRRVPLGVIGVIYEARPNVTIDVASLCLKTGNAVILRGGKETHYTNQATVNVIQRALEQCGLPAAAVQAIESPDRQLVNELLRLDRYVDMLIPRGGASLHKLCREQSTIPVITGGIGVCHTFVDENADFEKALLVIENAKIQRPSACNSLETLLVHQAVAKTFLPLLSARMHAFGVTLHASPLAMPYLADGKAKVVAVEAADYDDEWLSLDLNVDIVTDIDAAIDHIREHGTSHSDAILTRSLSHAEYFVRAVDSSAVYVNASTRFTDGGQFGLGAEVAVSTQKLHARGPMGLDALTTYKWIGYGDDLVRS</sequence>